<accession>B2J1W7</accession>
<sequence length="362" mass="39363">MGNIFGHLFRISTFGESHGGGVGVVIDGCPPQLEISAEEIQVELDRRRPGQSKITTPRKEADTCEIISGVFEGKTLGTPITILVRNQDTRPQDYDEMAQKYRPSHADATYDAKYGIRNWQGGGRSSARETIGRVAAGAIAKKILRQVANVEIIAYVKRIKDLEGVVDPNTVTLEQVESNIVRCPDAECGDRMIELIEQIGRQGDSIGGVVECVARNVPKGLGEPVFDKLEADIAKGVMSLPASKGFEIGSGFAGTLLTGIEHNDEFYIDQNDEIRTVTNRSGGIQGGISNGENIILRVAFKPTATIRKEQKTVTREGEETLLAAKGRHDPCVLPRAVPMVEAMVALVLCDHLLRHHGQCKVL</sequence>
<proteinExistence type="inferred from homology"/>
<dbReference type="EC" id="4.2.3.5" evidence="1"/>
<dbReference type="EMBL" id="CP001037">
    <property type="protein sequence ID" value="ACC81969.1"/>
    <property type="molecule type" value="Genomic_DNA"/>
</dbReference>
<dbReference type="RefSeq" id="WP_012409941.1">
    <property type="nucleotide sequence ID" value="NC_010628.1"/>
</dbReference>
<dbReference type="SMR" id="B2J1W7"/>
<dbReference type="STRING" id="63737.Npun_F3573"/>
<dbReference type="EnsemblBacteria" id="ACC81969">
    <property type="protein sequence ID" value="ACC81969"/>
    <property type="gene ID" value="Npun_F3573"/>
</dbReference>
<dbReference type="KEGG" id="npu:Npun_F3573"/>
<dbReference type="eggNOG" id="COG0082">
    <property type="taxonomic scope" value="Bacteria"/>
</dbReference>
<dbReference type="HOGENOM" id="CLU_034547_0_1_3"/>
<dbReference type="OrthoDB" id="9771806at2"/>
<dbReference type="PhylomeDB" id="B2J1W7"/>
<dbReference type="UniPathway" id="UPA00053">
    <property type="reaction ID" value="UER00090"/>
</dbReference>
<dbReference type="Proteomes" id="UP000001191">
    <property type="component" value="Chromosome"/>
</dbReference>
<dbReference type="GO" id="GO:0005829">
    <property type="term" value="C:cytosol"/>
    <property type="evidence" value="ECO:0007669"/>
    <property type="project" value="TreeGrafter"/>
</dbReference>
<dbReference type="GO" id="GO:0004107">
    <property type="term" value="F:chorismate synthase activity"/>
    <property type="evidence" value="ECO:0007669"/>
    <property type="project" value="UniProtKB-UniRule"/>
</dbReference>
<dbReference type="GO" id="GO:0010181">
    <property type="term" value="F:FMN binding"/>
    <property type="evidence" value="ECO:0007669"/>
    <property type="project" value="TreeGrafter"/>
</dbReference>
<dbReference type="GO" id="GO:0008652">
    <property type="term" value="P:amino acid biosynthetic process"/>
    <property type="evidence" value="ECO:0007669"/>
    <property type="project" value="UniProtKB-KW"/>
</dbReference>
<dbReference type="GO" id="GO:0009073">
    <property type="term" value="P:aromatic amino acid family biosynthetic process"/>
    <property type="evidence" value="ECO:0007669"/>
    <property type="project" value="UniProtKB-KW"/>
</dbReference>
<dbReference type="GO" id="GO:0009423">
    <property type="term" value="P:chorismate biosynthetic process"/>
    <property type="evidence" value="ECO:0007669"/>
    <property type="project" value="UniProtKB-UniRule"/>
</dbReference>
<dbReference type="CDD" id="cd07304">
    <property type="entry name" value="Chorismate_synthase"/>
    <property type="match status" value="1"/>
</dbReference>
<dbReference type="FunFam" id="3.60.150.10:FF:000003">
    <property type="entry name" value="Chorismate synthase"/>
    <property type="match status" value="1"/>
</dbReference>
<dbReference type="Gene3D" id="3.60.150.10">
    <property type="entry name" value="Chorismate synthase AroC"/>
    <property type="match status" value="1"/>
</dbReference>
<dbReference type="HAMAP" id="MF_00300">
    <property type="entry name" value="Chorismate_synth"/>
    <property type="match status" value="1"/>
</dbReference>
<dbReference type="InterPro" id="IPR000453">
    <property type="entry name" value="Chorismate_synth"/>
</dbReference>
<dbReference type="InterPro" id="IPR035904">
    <property type="entry name" value="Chorismate_synth_AroC_sf"/>
</dbReference>
<dbReference type="InterPro" id="IPR020541">
    <property type="entry name" value="Chorismate_synthase_CS"/>
</dbReference>
<dbReference type="NCBIfam" id="TIGR00033">
    <property type="entry name" value="aroC"/>
    <property type="match status" value="1"/>
</dbReference>
<dbReference type="NCBIfam" id="NF003793">
    <property type="entry name" value="PRK05382.1"/>
    <property type="match status" value="1"/>
</dbReference>
<dbReference type="PANTHER" id="PTHR21085">
    <property type="entry name" value="CHORISMATE SYNTHASE"/>
    <property type="match status" value="1"/>
</dbReference>
<dbReference type="PANTHER" id="PTHR21085:SF0">
    <property type="entry name" value="CHORISMATE SYNTHASE"/>
    <property type="match status" value="1"/>
</dbReference>
<dbReference type="Pfam" id="PF01264">
    <property type="entry name" value="Chorismate_synt"/>
    <property type="match status" value="1"/>
</dbReference>
<dbReference type="PIRSF" id="PIRSF001456">
    <property type="entry name" value="Chorismate_synth"/>
    <property type="match status" value="1"/>
</dbReference>
<dbReference type="SUPFAM" id="SSF103263">
    <property type="entry name" value="Chorismate synthase, AroC"/>
    <property type="match status" value="1"/>
</dbReference>
<dbReference type="PROSITE" id="PS00787">
    <property type="entry name" value="CHORISMATE_SYNTHASE_1"/>
    <property type="match status" value="1"/>
</dbReference>
<dbReference type="PROSITE" id="PS00788">
    <property type="entry name" value="CHORISMATE_SYNTHASE_2"/>
    <property type="match status" value="1"/>
</dbReference>
<dbReference type="PROSITE" id="PS00789">
    <property type="entry name" value="CHORISMATE_SYNTHASE_3"/>
    <property type="match status" value="1"/>
</dbReference>
<name>AROC_NOSP7</name>
<protein>
    <recommendedName>
        <fullName evidence="1">Chorismate synthase</fullName>
        <shortName evidence="1">CS</shortName>
        <ecNumber evidence="1">4.2.3.5</ecNumber>
    </recommendedName>
    <alternativeName>
        <fullName evidence="1">5-enolpyruvylshikimate-3-phosphate phospholyase</fullName>
    </alternativeName>
</protein>
<feature type="chain" id="PRO_1000115376" description="Chorismate synthase">
    <location>
        <begin position="1"/>
        <end position="362"/>
    </location>
</feature>
<feature type="binding site" evidence="1">
    <location>
        <position position="47"/>
    </location>
    <ligand>
        <name>NADP(+)</name>
        <dbReference type="ChEBI" id="CHEBI:58349"/>
    </ligand>
</feature>
<feature type="binding site" evidence="1">
    <location>
        <begin position="124"/>
        <end position="126"/>
    </location>
    <ligand>
        <name>FMN</name>
        <dbReference type="ChEBI" id="CHEBI:58210"/>
    </ligand>
</feature>
<feature type="binding site" evidence="1">
    <location>
        <position position="286"/>
    </location>
    <ligand>
        <name>FMN</name>
        <dbReference type="ChEBI" id="CHEBI:58210"/>
    </ligand>
</feature>
<feature type="binding site" evidence="1">
    <location>
        <begin position="301"/>
        <end position="305"/>
    </location>
    <ligand>
        <name>FMN</name>
        <dbReference type="ChEBI" id="CHEBI:58210"/>
    </ligand>
</feature>
<feature type="binding site" evidence="1">
    <location>
        <position position="327"/>
    </location>
    <ligand>
        <name>FMN</name>
        <dbReference type="ChEBI" id="CHEBI:58210"/>
    </ligand>
</feature>
<gene>
    <name evidence="1" type="primary">aroC</name>
    <name type="ordered locus">Npun_F3573</name>
</gene>
<evidence type="ECO:0000255" key="1">
    <source>
        <dbReference type="HAMAP-Rule" id="MF_00300"/>
    </source>
</evidence>
<comment type="function">
    <text evidence="1">Catalyzes the anti-1,4-elimination of the C-3 phosphate and the C-6 proR hydrogen from 5-enolpyruvylshikimate-3-phosphate (EPSP) to yield chorismate, which is the branch point compound that serves as the starting substrate for the three terminal pathways of aromatic amino acid biosynthesis. This reaction introduces a second double bond into the aromatic ring system.</text>
</comment>
<comment type="catalytic activity">
    <reaction evidence="1">
        <text>5-O-(1-carboxyvinyl)-3-phosphoshikimate = chorismate + phosphate</text>
        <dbReference type="Rhea" id="RHEA:21020"/>
        <dbReference type="ChEBI" id="CHEBI:29748"/>
        <dbReference type="ChEBI" id="CHEBI:43474"/>
        <dbReference type="ChEBI" id="CHEBI:57701"/>
        <dbReference type="EC" id="4.2.3.5"/>
    </reaction>
</comment>
<comment type="cofactor">
    <cofactor evidence="1">
        <name>FMNH2</name>
        <dbReference type="ChEBI" id="CHEBI:57618"/>
    </cofactor>
    <text evidence="1">Reduced FMN (FMNH(2)).</text>
</comment>
<comment type="pathway">
    <text evidence="1">Metabolic intermediate biosynthesis; chorismate biosynthesis; chorismate from D-erythrose 4-phosphate and phosphoenolpyruvate: step 7/7.</text>
</comment>
<comment type="subunit">
    <text evidence="1">Homotetramer.</text>
</comment>
<comment type="similarity">
    <text evidence="1">Belongs to the chorismate synthase family.</text>
</comment>
<keyword id="KW-0028">Amino-acid biosynthesis</keyword>
<keyword id="KW-0057">Aromatic amino acid biosynthesis</keyword>
<keyword id="KW-0274">FAD</keyword>
<keyword id="KW-0285">Flavoprotein</keyword>
<keyword id="KW-0288">FMN</keyword>
<keyword id="KW-0456">Lyase</keyword>
<keyword id="KW-0521">NADP</keyword>
<keyword id="KW-1185">Reference proteome</keyword>
<reference key="1">
    <citation type="journal article" date="2013" name="Plant Physiol.">
        <title>A Nostoc punctiforme Sugar Transporter Necessary to Establish a Cyanobacterium-Plant Symbiosis.</title>
        <authorList>
            <person name="Ekman M."/>
            <person name="Picossi S."/>
            <person name="Campbell E.L."/>
            <person name="Meeks J.C."/>
            <person name="Flores E."/>
        </authorList>
    </citation>
    <scope>NUCLEOTIDE SEQUENCE [LARGE SCALE GENOMIC DNA]</scope>
    <source>
        <strain>ATCC 29133 / PCC 73102</strain>
    </source>
</reference>
<organism>
    <name type="scientific">Nostoc punctiforme (strain ATCC 29133 / PCC 73102)</name>
    <dbReference type="NCBI Taxonomy" id="63737"/>
    <lineage>
        <taxon>Bacteria</taxon>
        <taxon>Bacillati</taxon>
        <taxon>Cyanobacteriota</taxon>
        <taxon>Cyanophyceae</taxon>
        <taxon>Nostocales</taxon>
        <taxon>Nostocaceae</taxon>
        <taxon>Nostoc</taxon>
    </lineage>
</organism>